<reference key="1">
    <citation type="journal article" date="1997" name="Nature">
        <title>The nucleotide sequence of Saccharomyces cerevisiae chromosome XVI.</title>
        <authorList>
            <person name="Bussey H."/>
            <person name="Storms R.K."/>
            <person name="Ahmed A."/>
            <person name="Albermann K."/>
            <person name="Allen E."/>
            <person name="Ansorge W."/>
            <person name="Araujo R."/>
            <person name="Aparicio A."/>
            <person name="Barrell B.G."/>
            <person name="Badcock K."/>
            <person name="Benes V."/>
            <person name="Botstein D."/>
            <person name="Bowman S."/>
            <person name="Brueckner M."/>
            <person name="Carpenter J."/>
            <person name="Cherry J.M."/>
            <person name="Chung E."/>
            <person name="Churcher C.M."/>
            <person name="Coster F."/>
            <person name="Davis K."/>
            <person name="Davis R.W."/>
            <person name="Dietrich F.S."/>
            <person name="Delius H."/>
            <person name="DiPaolo T."/>
            <person name="Dubois E."/>
            <person name="Duesterhoeft A."/>
            <person name="Duncan M."/>
            <person name="Floeth M."/>
            <person name="Fortin N."/>
            <person name="Friesen J.D."/>
            <person name="Fritz C."/>
            <person name="Goffeau A."/>
            <person name="Hall J."/>
            <person name="Hebling U."/>
            <person name="Heumann K."/>
            <person name="Hilbert H."/>
            <person name="Hillier L.W."/>
            <person name="Hunicke-Smith S."/>
            <person name="Hyman R.W."/>
            <person name="Johnston M."/>
            <person name="Kalman S."/>
            <person name="Kleine K."/>
            <person name="Komp C."/>
            <person name="Kurdi O."/>
            <person name="Lashkari D."/>
            <person name="Lew H."/>
            <person name="Lin A."/>
            <person name="Lin D."/>
            <person name="Louis E.J."/>
            <person name="Marathe R."/>
            <person name="Messenguy F."/>
            <person name="Mewes H.-W."/>
            <person name="Mirtipati S."/>
            <person name="Moestl D."/>
            <person name="Mueller-Auer S."/>
            <person name="Namath A."/>
            <person name="Nentwich U."/>
            <person name="Oefner P."/>
            <person name="Pearson D."/>
            <person name="Petel F.X."/>
            <person name="Pohl T.M."/>
            <person name="Purnelle B."/>
            <person name="Rajandream M.A."/>
            <person name="Rechmann S."/>
            <person name="Rieger M."/>
            <person name="Riles L."/>
            <person name="Roberts D."/>
            <person name="Schaefer M."/>
            <person name="Scharfe M."/>
            <person name="Scherens B."/>
            <person name="Schramm S."/>
            <person name="Schroeder M."/>
            <person name="Sdicu A.-M."/>
            <person name="Tettelin H."/>
            <person name="Urrestarazu L.A."/>
            <person name="Ushinsky S."/>
            <person name="Vierendeels F."/>
            <person name="Vissers S."/>
            <person name="Voss H."/>
            <person name="Walsh S.V."/>
            <person name="Wambutt R."/>
            <person name="Wang Y."/>
            <person name="Wedler E."/>
            <person name="Wedler H."/>
            <person name="Winnett E."/>
            <person name="Zhong W.-W."/>
            <person name="Zollner A."/>
            <person name="Vo D.H."/>
            <person name="Hani J."/>
        </authorList>
    </citation>
    <scope>NUCLEOTIDE SEQUENCE [LARGE SCALE GENOMIC DNA]</scope>
    <source>
        <strain>ATCC 204508 / S288c</strain>
    </source>
</reference>
<reference key="2">
    <citation type="journal article" date="2014" name="G3 (Bethesda)">
        <title>The reference genome sequence of Saccharomyces cerevisiae: Then and now.</title>
        <authorList>
            <person name="Engel S.R."/>
            <person name="Dietrich F.S."/>
            <person name="Fisk D.G."/>
            <person name="Binkley G."/>
            <person name="Balakrishnan R."/>
            <person name="Costanzo M.C."/>
            <person name="Dwight S.S."/>
            <person name="Hitz B.C."/>
            <person name="Karra K."/>
            <person name="Nash R.S."/>
            <person name="Weng S."/>
            <person name="Wong E.D."/>
            <person name="Lloyd P."/>
            <person name="Skrzypek M.S."/>
            <person name="Miyasato S.R."/>
            <person name="Simison M."/>
            <person name="Cherry J.M."/>
        </authorList>
    </citation>
    <scope>GENOME REANNOTATION</scope>
    <source>
        <strain>ATCC 204508 / S288c</strain>
    </source>
</reference>
<reference key="3">
    <citation type="journal article" date="2007" name="Genome Res.">
        <title>Approaching a complete repository of sequence-verified protein-encoding clones for Saccharomyces cerevisiae.</title>
        <authorList>
            <person name="Hu Y."/>
            <person name="Rolfs A."/>
            <person name="Bhullar B."/>
            <person name="Murthy T.V.S."/>
            <person name="Zhu C."/>
            <person name="Berger M.F."/>
            <person name="Camargo A.A."/>
            <person name="Kelley F."/>
            <person name="McCarron S."/>
            <person name="Jepson D."/>
            <person name="Richardson A."/>
            <person name="Raphael J."/>
            <person name="Moreira D."/>
            <person name="Taycher E."/>
            <person name="Zuo D."/>
            <person name="Mohr S."/>
            <person name="Kane M.F."/>
            <person name="Williamson J."/>
            <person name="Simpson A.J.G."/>
            <person name="Bulyk M.L."/>
            <person name="Harlow E."/>
            <person name="Marsischky G."/>
            <person name="Kolodner R.D."/>
            <person name="LaBaer J."/>
        </authorList>
    </citation>
    <scope>NUCLEOTIDE SEQUENCE [GENOMIC DNA]</scope>
    <source>
        <strain>ATCC 204508 / S288c</strain>
    </source>
</reference>
<gene>
    <name type="ordered locus">YPL278C</name>
</gene>
<name>YP278_YEAST</name>
<keyword id="KW-1185">Reference proteome</keyword>
<dbReference type="EMBL" id="Z73634">
    <property type="protein sequence ID" value="CAA98015.1"/>
    <property type="molecule type" value="Genomic_DNA"/>
</dbReference>
<dbReference type="EMBL" id="AY692676">
    <property type="protein sequence ID" value="AAT92695.1"/>
    <property type="molecule type" value="Genomic_DNA"/>
</dbReference>
<dbReference type="EMBL" id="BK006949">
    <property type="protein sequence ID" value="DAA11160.1"/>
    <property type="molecule type" value="Genomic_DNA"/>
</dbReference>
<dbReference type="RefSeq" id="NP_015045.1">
    <property type="nucleotide sequence ID" value="NM_001184092.1"/>
</dbReference>
<dbReference type="SMR" id="Q08990"/>
<dbReference type="BioGRID" id="35937">
    <property type="interactions" value="2"/>
</dbReference>
<dbReference type="FunCoup" id="Q08990">
    <property type="interactions" value="38"/>
</dbReference>
<dbReference type="PeptideAtlas" id="Q08990"/>
<dbReference type="EnsemblFungi" id="YPL278C_mRNA">
    <property type="protein sequence ID" value="YPL278C"/>
    <property type="gene ID" value="YPL278C"/>
</dbReference>
<dbReference type="GeneID" id="855851"/>
<dbReference type="KEGG" id="sce:YPL278C"/>
<dbReference type="AGR" id="SGD:S000006199"/>
<dbReference type="SGD" id="S000006199">
    <property type="gene designation" value="YPL278C"/>
</dbReference>
<dbReference type="VEuPathDB" id="FungiDB:YPL278C"/>
<dbReference type="HOGENOM" id="CLU_2308268_0_0_1"/>
<dbReference type="InParanoid" id="Q08990"/>
<dbReference type="OrthoDB" id="10261782at2759"/>
<dbReference type="BioCyc" id="YEAST:G3O-34159-MONOMER"/>
<dbReference type="Proteomes" id="UP000002311">
    <property type="component" value="Chromosome XVI"/>
</dbReference>
<dbReference type="RNAct" id="Q08990">
    <property type="molecule type" value="protein"/>
</dbReference>
<dbReference type="InterPro" id="IPR038921">
    <property type="entry name" value="YOR389W-like"/>
</dbReference>
<dbReference type="PANTHER" id="PTHR35204:SF1">
    <property type="entry name" value="ENTEROTOXIN"/>
    <property type="match status" value="1"/>
</dbReference>
<dbReference type="PANTHER" id="PTHR35204">
    <property type="entry name" value="YALI0A21131P"/>
    <property type="match status" value="1"/>
</dbReference>
<organism>
    <name type="scientific">Saccharomyces cerevisiae (strain ATCC 204508 / S288c)</name>
    <name type="common">Baker's yeast</name>
    <dbReference type="NCBI Taxonomy" id="559292"/>
    <lineage>
        <taxon>Eukaryota</taxon>
        <taxon>Fungi</taxon>
        <taxon>Dikarya</taxon>
        <taxon>Ascomycota</taxon>
        <taxon>Saccharomycotina</taxon>
        <taxon>Saccharomycetes</taxon>
        <taxon>Saccharomycetales</taxon>
        <taxon>Saccharomycetaceae</taxon>
        <taxon>Saccharomyces</taxon>
    </lineage>
</organism>
<comment type="caution">
    <text evidence="1">Could be the product of a pseudogene. YPL277C and YPL278C correspond to the N- and C-terminal regions of the uncharacterized protein YOR389W, respectively.</text>
</comment>
<protein>
    <recommendedName>
        <fullName>Putative uncharacterized protein YPL278C</fullName>
    </recommendedName>
</protein>
<sequence>MTDNTTSSDLIKNVETARSTIDGLIESLGWIELNYRCERQCNWDEVCYTPSWGPSPMGMTEPGSHNEGFGTHFDESRQRLVINSKLQCININDLMVNRNH</sequence>
<accession>Q08990</accession>
<accession>D6W394</accession>
<evidence type="ECO:0000305" key="1"/>
<feature type="chain" id="PRO_0000269761" description="Putative uncharacterized protein YPL278C">
    <location>
        <begin position="1"/>
        <end position="100"/>
    </location>
</feature>
<proteinExistence type="uncertain"/>